<organism>
    <name type="scientific">Yersinia pseudotuberculosis serotype O:1b (strain IP 31758)</name>
    <dbReference type="NCBI Taxonomy" id="349747"/>
    <lineage>
        <taxon>Bacteria</taxon>
        <taxon>Pseudomonadati</taxon>
        <taxon>Pseudomonadota</taxon>
        <taxon>Gammaproteobacteria</taxon>
        <taxon>Enterobacterales</taxon>
        <taxon>Yersiniaceae</taxon>
        <taxon>Yersinia</taxon>
    </lineage>
</organism>
<gene>
    <name evidence="1" type="primary">sufS</name>
    <name type="ordered locus">YpsIP31758_1745</name>
</gene>
<comment type="function">
    <text evidence="1">Cysteine desulfurases mobilize the sulfur from L-cysteine to yield L-alanine, an essential step in sulfur metabolism for biosynthesis of a variety of sulfur-containing biomolecules. Component of the suf operon, which is activated and required under specific conditions such as oxidative stress and iron limitation. Acts as a potent selenocysteine lyase in vitro, that mobilizes selenium from L-selenocysteine. Selenocysteine lyase activity is however unsure in vivo.</text>
</comment>
<comment type="catalytic activity">
    <reaction evidence="1">
        <text>(sulfur carrier)-H + L-cysteine = (sulfur carrier)-SH + L-alanine</text>
        <dbReference type="Rhea" id="RHEA:43892"/>
        <dbReference type="Rhea" id="RHEA-COMP:14737"/>
        <dbReference type="Rhea" id="RHEA-COMP:14739"/>
        <dbReference type="ChEBI" id="CHEBI:29917"/>
        <dbReference type="ChEBI" id="CHEBI:35235"/>
        <dbReference type="ChEBI" id="CHEBI:57972"/>
        <dbReference type="ChEBI" id="CHEBI:64428"/>
        <dbReference type="EC" id="2.8.1.7"/>
    </reaction>
</comment>
<comment type="catalytic activity">
    <reaction evidence="1">
        <text>L-selenocysteine + AH2 = hydrogenselenide + L-alanine + A + H(+)</text>
        <dbReference type="Rhea" id="RHEA:11632"/>
        <dbReference type="ChEBI" id="CHEBI:13193"/>
        <dbReference type="ChEBI" id="CHEBI:15378"/>
        <dbReference type="ChEBI" id="CHEBI:17499"/>
        <dbReference type="ChEBI" id="CHEBI:29317"/>
        <dbReference type="ChEBI" id="CHEBI:57843"/>
        <dbReference type="ChEBI" id="CHEBI:57972"/>
        <dbReference type="EC" id="4.4.1.16"/>
    </reaction>
</comment>
<comment type="cofactor">
    <cofactor evidence="1">
        <name>pyridoxal 5'-phosphate</name>
        <dbReference type="ChEBI" id="CHEBI:597326"/>
    </cofactor>
</comment>
<comment type="pathway">
    <text evidence="1">Cofactor biosynthesis; iron-sulfur cluster biosynthesis.</text>
</comment>
<comment type="subunit">
    <text evidence="1">Homodimer. Interacts with SufE and the SufBCD complex composed of SufB, SufC and SufD. The interaction with SufE is required to mediate the direct transfer of the sulfur atom from the S-sulfanylcysteine.</text>
</comment>
<comment type="subcellular location">
    <subcellularLocation>
        <location evidence="1">Cytoplasm</location>
    </subcellularLocation>
</comment>
<comment type="similarity">
    <text evidence="1">Belongs to the class-V pyridoxal-phosphate-dependent aminotransferase family. Csd subfamily.</text>
</comment>
<evidence type="ECO:0000255" key="1">
    <source>
        <dbReference type="HAMAP-Rule" id="MF_01831"/>
    </source>
</evidence>
<feature type="chain" id="PRO_1000188312" description="Cysteine desulfurase">
    <location>
        <begin position="1"/>
        <end position="406"/>
    </location>
</feature>
<feature type="active site" description="Cysteine persulfide intermediate" evidence="1">
    <location>
        <position position="364"/>
    </location>
</feature>
<feature type="modified residue" description="N6-(pyridoxal phosphate)lysine" evidence="1">
    <location>
        <position position="226"/>
    </location>
</feature>
<proteinExistence type="inferred from homology"/>
<sequence>MSFPIERVRADFPLLSRQVNGQPLVYLDSAASAQKPQAVIDKELHFYRDGYAAVHRGIHSLSAEATQQMEAVRTQVADFIHAASAEEIIFVRGTTEAINLVANSYGRHFLVTGDSIIITEMEHHANIVPWQMLAQDLGVEIRVWPLTATGELEITDLAALIDDTTRLLAVTQISNVLGTVNPIKDIVAQAKAAGLVVLVDGAQAVMHQPVDVQALGCDFYVFSGHKLYGPSGIGILYGKSALLQQMPPWEGGGAMIKTVSLTQGTTFADAPWRFEAGSPNTAGIMGLGAAIDYVTELGLLQIQQYEQSLMHYALAQLSQIKSLTLYGPTERAGVIAFNLGLHHAYDVGSFLDQYGIAIRTGHHCAMPLMAFYQVPSMCRASLALYNTREDVDRLVAGLQRIEKLLG</sequence>
<dbReference type="EC" id="2.8.1.7" evidence="1"/>
<dbReference type="EC" id="4.4.1.16" evidence="1"/>
<dbReference type="EMBL" id="CP000720">
    <property type="protein sequence ID" value="ABS46259.1"/>
    <property type="molecule type" value="Genomic_DNA"/>
</dbReference>
<dbReference type="RefSeq" id="WP_012105028.1">
    <property type="nucleotide sequence ID" value="NC_009708.1"/>
</dbReference>
<dbReference type="SMR" id="A7FHJ2"/>
<dbReference type="KEGG" id="ypi:YpsIP31758_1745"/>
<dbReference type="HOGENOM" id="CLU_003433_2_5_6"/>
<dbReference type="UniPathway" id="UPA00266"/>
<dbReference type="Proteomes" id="UP000002412">
    <property type="component" value="Chromosome"/>
</dbReference>
<dbReference type="GO" id="GO:0005737">
    <property type="term" value="C:cytoplasm"/>
    <property type="evidence" value="ECO:0007669"/>
    <property type="project" value="UniProtKB-SubCell"/>
</dbReference>
<dbReference type="GO" id="GO:0031071">
    <property type="term" value="F:cysteine desulfurase activity"/>
    <property type="evidence" value="ECO:0007669"/>
    <property type="project" value="UniProtKB-UniRule"/>
</dbReference>
<dbReference type="GO" id="GO:0030170">
    <property type="term" value="F:pyridoxal phosphate binding"/>
    <property type="evidence" value="ECO:0007669"/>
    <property type="project" value="InterPro"/>
</dbReference>
<dbReference type="GO" id="GO:0009000">
    <property type="term" value="F:selenocysteine lyase activity"/>
    <property type="evidence" value="ECO:0007669"/>
    <property type="project" value="UniProtKB-UniRule"/>
</dbReference>
<dbReference type="GO" id="GO:0006534">
    <property type="term" value="P:cysteine metabolic process"/>
    <property type="evidence" value="ECO:0007669"/>
    <property type="project" value="InterPro"/>
</dbReference>
<dbReference type="CDD" id="cd06453">
    <property type="entry name" value="SufS_like"/>
    <property type="match status" value="1"/>
</dbReference>
<dbReference type="Gene3D" id="3.90.1150.10">
    <property type="entry name" value="Aspartate Aminotransferase, domain 1"/>
    <property type="match status" value="1"/>
</dbReference>
<dbReference type="Gene3D" id="3.40.640.10">
    <property type="entry name" value="Type I PLP-dependent aspartate aminotransferase-like (Major domain)"/>
    <property type="match status" value="1"/>
</dbReference>
<dbReference type="HAMAP" id="MF_01831">
    <property type="entry name" value="SufS_aminotrans_5"/>
    <property type="match status" value="1"/>
</dbReference>
<dbReference type="InterPro" id="IPR000192">
    <property type="entry name" value="Aminotrans_V_dom"/>
</dbReference>
<dbReference type="InterPro" id="IPR020578">
    <property type="entry name" value="Aminotrans_V_PyrdxlP_BS"/>
</dbReference>
<dbReference type="InterPro" id="IPR010970">
    <property type="entry name" value="Cys_dSase_SufS"/>
</dbReference>
<dbReference type="InterPro" id="IPR015424">
    <property type="entry name" value="PyrdxlP-dep_Trfase"/>
</dbReference>
<dbReference type="InterPro" id="IPR015421">
    <property type="entry name" value="PyrdxlP-dep_Trfase_major"/>
</dbReference>
<dbReference type="InterPro" id="IPR015422">
    <property type="entry name" value="PyrdxlP-dep_Trfase_small"/>
</dbReference>
<dbReference type="NCBIfam" id="NF006791">
    <property type="entry name" value="PRK09295.1"/>
    <property type="match status" value="1"/>
</dbReference>
<dbReference type="NCBIfam" id="TIGR01979">
    <property type="entry name" value="sufS"/>
    <property type="match status" value="1"/>
</dbReference>
<dbReference type="PANTHER" id="PTHR43586">
    <property type="entry name" value="CYSTEINE DESULFURASE"/>
    <property type="match status" value="1"/>
</dbReference>
<dbReference type="PANTHER" id="PTHR43586:SF25">
    <property type="entry name" value="CYSTEINE DESULFURASE"/>
    <property type="match status" value="1"/>
</dbReference>
<dbReference type="Pfam" id="PF00266">
    <property type="entry name" value="Aminotran_5"/>
    <property type="match status" value="1"/>
</dbReference>
<dbReference type="SUPFAM" id="SSF53383">
    <property type="entry name" value="PLP-dependent transferases"/>
    <property type="match status" value="1"/>
</dbReference>
<dbReference type="PROSITE" id="PS00595">
    <property type="entry name" value="AA_TRANSFER_CLASS_5"/>
    <property type="match status" value="1"/>
</dbReference>
<keyword id="KW-0963">Cytoplasm</keyword>
<keyword id="KW-0456">Lyase</keyword>
<keyword id="KW-0663">Pyridoxal phosphate</keyword>
<keyword id="KW-0808">Transferase</keyword>
<accession>A7FHJ2</accession>
<name>SUFS_YERP3</name>
<reference key="1">
    <citation type="journal article" date="2007" name="PLoS Genet.">
        <title>The complete genome sequence of Yersinia pseudotuberculosis IP31758, the causative agent of Far East scarlet-like fever.</title>
        <authorList>
            <person name="Eppinger M."/>
            <person name="Rosovitz M.J."/>
            <person name="Fricke W.F."/>
            <person name="Rasko D.A."/>
            <person name="Kokorina G."/>
            <person name="Fayolle C."/>
            <person name="Lindler L.E."/>
            <person name="Carniel E."/>
            <person name="Ravel J."/>
        </authorList>
    </citation>
    <scope>NUCLEOTIDE SEQUENCE [LARGE SCALE GENOMIC DNA]</scope>
    <source>
        <strain>IP 31758</strain>
    </source>
</reference>
<protein>
    <recommendedName>
        <fullName evidence="1">Cysteine desulfurase</fullName>
        <ecNumber evidence="1">2.8.1.7</ecNumber>
    </recommendedName>
    <alternativeName>
        <fullName evidence="1">Selenocysteine beta-lyase</fullName>
        <shortName evidence="1">SCL</shortName>
    </alternativeName>
    <alternativeName>
        <fullName evidence="1">Selenocysteine lyase</fullName>
        <ecNumber evidence="1">4.4.1.16</ecNumber>
    </alternativeName>
    <alternativeName>
        <fullName evidence="1">Selenocysteine reductase</fullName>
    </alternativeName>
</protein>